<dbReference type="EMBL" id="AC005882">
    <property type="protein sequence ID" value="AAD21426.1"/>
    <property type="molecule type" value="Genomic_DNA"/>
</dbReference>
<dbReference type="EMBL" id="CP002684">
    <property type="protein sequence ID" value="AEE33877.1"/>
    <property type="molecule type" value="Genomic_DNA"/>
</dbReference>
<dbReference type="PIR" id="F96642">
    <property type="entry name" value="F96642"/>
</dbReference>
<dbReference type="RefSeq" id="NP_176363.1">
    <property type="nucleotide sequence ID" value="NM_104852.4"/>
</dbReference>
<dbReference type="SMR" id="Q9SYA6"/>
<dbReference type="BioGRID" id="27690">
    <property type="interactions" value="49"/>
</dbReference>
<dbReference type="FunCoup" id="Q9SYA6">
    <property type="interactions" value="1707"/>
</dbReference>
<dbReference type="STRING" id="3702.Q9SYA6"/>
<dbReference type="iPTMnet" id="Q9SYA6"/>
<dbReference type="PaxDb" id="3702-AT1G61700.1"/>
<dbReference type="ProteomicsDB" id="228243"/>
<dbReference type="EnsemblPlants" id="AT1G61700.1">
    <property type="protein sequence ID" value="AT1G61700.1"/>
    <property type="gene ID" value="AT1G61700"/>
</dbReference>
<dbReference type="GeneID" id="842467"/>
<dbReference type="Gramene" id="AT1G61700.1">
    <property type="protein sequence ID" value="AT1G61700.1"/>
    <property type="gene ID" value="AT1G61700"/>
</dbReference>
<dbReference type="KEGG" id="ath:AT1G61700"/>
<dbReference type="Araport" id="AT1G61700"/>
<dbReference type="TAIR" id="AT1G61700"/>
<dbReference type="eggNOG" id="KOG3497">
    <property type="taxonomic scope" value="Eukaryota"/>
</dbReference>
<dbReference type="HOGENOM" id="CLU_143122_2_1_1"/>
<dbReference type="InParanoid" id="Q9SYA6"/>
<dbReference type="OMA" id="MCHVDLI"/>
<dbReference type="OrthoDB" id="10258858at2759"/>
<dbReference type="PhylomeDB" id="Q9SYA6"/>
<dbReference type="PRO" id="PR:Q9SYA6"/>
<dbReference type="Proteomes" id="UP000006548">
    <property type="component" value="Chromosome 1"/>
</dbReference>
<dbReference type="ExpressionAtlas" id="Q9SYA6">
    <property type="expression patterns" value="baseline and differential"/>
</dbReference>
<dbReference type="GO" id="GO:0005665">
    <property type="term" value="C:RNA polymerase II, core complex"/>
    <property type="evidence" value="ECO:0007669"/>
    <property type="project" value="UniProtKB-ARBA"/>
</dbReference>
<dbReference type="GO" id="GO:0003677">
    <property type="term" value="F:DNA binding"/>
    <property type="evidence" value="ECO:0007669"/>
    <property type="project" value="InterPro"/>
</dbReference>
<dbReference type="GO" id="GO:0003899">
    <property type="term" value="F:DNA-directed RNA polymerase activity"/>
    <property type="evidence" value="ECO:0007669"/>
    <property type="project" value="InterPro"/>
</dbReference>
<dbReference type="GO" id="GO:0008270">
    <property type="term" value="F:zinc ion binding"/>
    <property type="evidence" value="ECO:0007669"/>
    <property type="project" value="InterPro"/>
</dbReference>
<dbReference type="GO" id="GO:0006351">
    <property type="term" value="P:DNA-templated transcription"/>
    <property type="evidence" value="ECO:0007669"/>
    <property type="project" value="InterPro"/>
</dbReference>
<dbReference type="FunFam" id="1.10.10.60:FF:000024">
    <property type="entry name" value="DNA-directed RNA polymerases I, II, and III subunit"/>
    <property type="match status" value="1"/>
</dbReference>
<dbReference type="Gene3D" id="1.10.10.60">
    <property type="entry name" value="Homeodomain-like"/>
    <property type="match status" value="1"/>
</dbReference>
<dbReference type="HAMAP" id="MF_00250">
    <property type="entry name" value="RNApol_arch_Rpo10"/>
    <property type="match status" value="1"/>
</dbReference>
<dbReference type="InterPro" id="IPR023580">
    <property type="entry name" value="RNA_pol_su_RPB10"/>
</dbReference>
<dbReference type="InterPro" id="IPR020789">
    <property type="entry name" value="RNA_pol_suN_Zn-BS"/>
</dbReference>
<dbReference type="InterPro" id="IPR000268">
    <property type="entry name" value="RPABC5/Rpb10"/>
</dbReference>
<dbReference type="NCBIfam" id="NF003089">
    <property type="entry name" value="PRK04016.1"/>
    <property type="match status" value="1"/>
</dbReference>
<dbReference type="PANTHER" id="PTHR23431:SF9">
    <property type="entry name" value="DNA-DIRECTED RNA POLYMERASE SUBUNIT 10-LIKE PROTEIN"/>
    <property type="match status" value="1"/>
</dbReference>
<dbReference type="PANTHER" id="PTHR23431">
    <property type="entry name" value="DNA-DIRECTED RNA POLYMERASES I, II, AND III SUBUNIT RPABC5 FAMILY MEMBER"/>
    <property type="match status" value="1"/>
</dbReference>
<dbReference type="Pfam" id="PF01194">
    <property type="entry name" value="RNA_pol_N"/>
    <property type="match status" value="1"/>
</dbReference>
<dbReference type="PIRSF" id="PIRSF005653">
    <property type="entry name" value="RNA_pol_N/8_sub"/>
    <property type="match status" value="1"/>
</dbReference>
<dbReference type="SUPFAM" id="SSF46924">
    <property type="entry name" value="RNA polymerase subunit RPB10"/>
    <property type="match status" value="1"/>
</dbReference>
<dbReference type="PROSITE" id="PS01112">
    <property type="entry name" value="RNA_POL_N_8KD"/>
    <property type="match status" value="1"/>
</dbReference>
<feature type="chain" id="PRO_0000121337" description="DNA-directed RNA polymerase subunit 10-like protein">
    <location>
        <begin position="1"/>
        <end position="71"/>
    </location>
</feature>
<feature type="binding site" evidence="1">
    <location>
        <position position="7"/>
    </location>
    <ligand>
        <name>Zn(2+)</name>
        <dbReference type="ChEBI" id="CHEBI:29105"/>
    </ligand>
</feature>
<feature type="binding site" evidence="1">
    <location>
        <position position="10"/>
    </location>
    <ligand>
        <name>Zn(2+)</name>
        <dbReference type="ChEBI" id="CHEBI:29105"/>
    </ligand>
</feature>
<feature type="binding site" evidence="1">
    <location>
        <position position="44"/>
    </location>
    <ligand>
        <name>Zn(2+)</name>
        <dbReference type="ChEBI" id="CHEBI:29105"/>
    </ligand>
</feature>
<feature type="binding site" evidence="1">
    <location>
        <position position="45"/>
    </location>
    <ligand>
        <name>Zn(2+)</name>
        <dbReference type="ChEBI" id="CHEBI:29105"/>
    </ligand>
</feature>
<gene>
    <name evidence="3" type="primary">NRPB10L</name>
    <name evidence="5" type="ordered locus">At1g61700</name>
    <name evidence="6" type="ORF">T13M11.6</name>
</gene>
<organism>
    <name type="scientific">Arabidopsis thaliana</name>
    <name type="common">Mouse-ear cress</name>
    <dbReference type="NCBI Taxonomy" id="3702"/>
    <lineage>
        <taxon>Eukaryota</taxon>
        <taxon>Viridiplantae</taxon>
        <taxon>Streptophyta</taxon>
        <taxon>Embryophyta</taxon>
        <taxon>Tracheophyta</taxon>
        <taxon>Spermatophyta</taxon>
        <taxon>Magnoliopsida</taxon>
        <taxon>eudicotyledons</taxon>
        <taxon>Gunneridae</taxon>
        <taxon>Pentapetalae</taxon>
        <taxon>rosids</taxon>
        <taxon>malvids</taxon>
        <taxon>Brassicales</taxon>
        <taxon>Brassicaceae</taxon>
        <taxon>Camelineae</taxon>
        <taxon>Arabidopsis</taxon>
    </lineage>
</organism>
<sequence>MIVPVRCFTCGKVIGNKWDTYLELLQADYAEGDALDALGLVRYCCRRMLMTHVDLIEKLLNYNTMEKSDPN</sequence>
<proteinExistence type="evidence at protein level"/>
<reference key="1">
    <citation type="journal article" date="2000" name="Nature">
        <title>Sequence and analysis of chromosome 1 of the plant Arabidopsis thaliana.</title>
        <authorList>
            <person name="Theologis A."/>
            <person name="Ecker J.R."/>
            <person name="Palm C.J."/>
            <person name="Federspiel N.A."/>
            <person name="Kaul S."/>
            <person name="White O."/>
            <person name="Alonso J."/>
            <person name="Altafi H."/>
            <person name="Araujo R."/>
            <person name="Bowman C.L."/>
            <person name="Brooks S.Y."/>
            <person name="Buehler E."/>
            <person name="Chan A."/>
            <person name="Chao Q."/>
            <person name="Chen H."/>
            <person name="Cheuk R.F."/>
            <person name="Chin C.W."/>
            <person name="Chung M.K."/>
            <person name="Conn L."/>
            <person name="Conway A.B."/>
            <person name="Conway A.R."/>
            <person name="Creasy T.H."/>
            <person name="Dewar K."/>
            <person name="Dunn P."/>
            <person name="Etgu P."/>
            <person name="Feldblyum T.V."/>
            <person name="Feng J.-D."/>
            <person name="Fong B."/>
            <person name="Fujii C.Y."/>
            <person name="Gill J.E."/>
            <person name="Goldsmith A.D."/>
            <person name="Haas B."/>
            <person name="Hansen N.F."/>
            <person name="Hughes B."/>
            <person name="Huizar L."/>
            <person name="Hunter J.L."/>
            <person name="Jenkins J."/>
            <person name="Johnson-Hopson C."/>
            <person name="Khan S."/>
            <person name="Khaykin E."/>
            <person name="Kim C.J."/>
            <person name="Koo H.L."/>
            <person name="Kremenetskaia I."/>
            <person name="Kurtz D.B."/>
            <person name="Kwan A."/>
            <person name="Lam B."/>
            <person name="Langin-Hooper S."/>
            <person name="Lee A."/>
            <person name="Lee J.M."/>
            <person name="Lenz C.A."/>
            <person name="Li J.H."/>
            <person name="Li Y.-P."/>
            <person name="Lin X."/>
            <person name="Liu S.X."/>
            <person name="Liu Z.A."/>
            <person name="Luros J.S."/>
            <person name="Maiti R."/>
            <person name="Marziali A."/>
            <person name="Militscher J."/>
            <person name="Miranda M."/>
            <person name="Nguyen M."/>
            <person name="Nierman W.C."/>
            <person name="Osborne B.I."/>
            <person name="Pai G."/>
            <person name="Peterson J."/>
            <person name="Pham P.K."/>
            <person name="Rizzo M."/>
            <person name="Rooney T."/>
            <person name="Rowley D."/>
            <person name="Sakano H."/>
            <person name="Salzberg S.L."/>
            <person name="Schwartz J.R."/>
            <person name="Shinn P."/>
            <person name="Southwick A.M."/>
            <person name="Sun H."/>
            <person name="Tallon L.J."/>
            <person name="Tambunga G."/>
            <person name="Toriumi M.J."/>
            <person name="Town C.D."/>
            <person name="Utterback T."/>
            <person name="Van Aken S."/>
            <person name="Vaysberg M."/>
            <person name="Vysotskaia V.S."/>
            <person name="Walker M."/>
            <person name="Wu D."/>
            <person name="Yu G."/>
            <person name="Fraser C.M."/>
            <person name="Venter J.C."/>
            <person name="Davis R.W."/>
        </authorList>
    </citation>
    <scope>NUCLEOTIDE SEQUENCE [LARGE SCALE GENOMIC DNA]</scope>
    <source>
        <strain>cv. Columbia</strain>
    </source>
</reference>
<reference key="2">
    <citation type="journal article" date="2017" name="Plant J.">
        <title>Araport11: a complete reannotation of the Arabidopsis thaliana reference genome.</title>
        <authorList>
            <person name="Cheng C.Y."/>
            <person name="Krishnakumar V."/>
            <person name="Chan A.P."/>
            <person name="Thibaud-Nissen F."/>
            <person name="Schobel S."/>
            <person name="Town C.D."/>
        </authorList>
    </citation>
    <scope>GENOME REANNOTATION</scope>
    <source>
        <strain>cv. Columbia</strain>
    </source>
</reference>
<reference key="3">
    <citation type="journal article" date="2009" name="Mol. Cell">
        <title>Subunit compositions of the RNA-silencing enzymes Pol IV and Pol V reveal their origins as specialized forms of RNA polymerase II.</title>
        <authorList>
            <person name="Ream T.S."/>
            <person name="Haag J.R."/>
            <person name="Wierzbicki A.T."/>
            <person name="Nicora C.D."/>
            <person name="Norbeck A.D."/>
            <person name="Zhu J.K."/>
            <person name="Hagen G."/>
            <person name="Guilfoyle T.J."/>
            <person name="Pasa-Tolic L."/>
            <person name="Pikaard C.S."/>
        </authorList>
    </citation>
    <scope>NOMENCLATURE</scope>
</reference>
<reference key="4">
    <citation type="journal article" date="2011" name="Curr. Biol.">
        <title>A molecular switch for initiating cell differentiation in Arabidopsis.</title>
        <authorList>
            <person name="Sanmartin M."/>
            <person name="Sauer M."/>
            <person name="Munoz A."/>
            <person name="Zouhar J."/>
            <person name="Ordonez A."/>
            <person name="van de Ven W.T."/>
            <person name="Caro E."/>
            <person name="de la Paz Sanchez M."/>
            <person name="Raikhel N.V."/>
            <person name="Gutierrez C."/>
            <person name="Sanchez-Serrano J.J."/>
            <person name="Rojo E."/>
        </authorList>
    </citation>
    <scope>INTERACTION WITH IYO</scope>
</reference>
<name>RPBAL_ARATH</name>
<comment type="subunit">
    <text evidence="2">Interacts with IYO (PubMed:21620701).</text>
</comment>
<comment type="subcellular location">
    <subcellularLocation>
        <location evidence="1">Nucleus</location>
    </subcellularLocation>
</comment>
<comment type="similarity">
    <text evidence="4">Belongs to the archaeal Rpo10/eukaryotic RPB10 RNA polymerase subunit family.</text>
</comment>
<keyword id="KW-0240">DNA-directed RNA polymerase</keyword>
<keyword id="KW-0479">Metal-binding</keyword>
<keyword id="KW-0539">Nucleus</keyword>
<keyword id="KW-1185">Reference proteome</keyword>
<keyword id="KW-0804">Transcription</keyword>
<keyword id="KW-0862">Zinc</keyword>
<protein>
    <recommendedName>
        <fullName evidence="3">DNA-directed RNA polymerase subunit 10-like protein</fullName>
    </recommendedName>
    <alternativeName>
        <fullName evidence="3">ABC10</fullName>
    </alternativeName>
    <alternativeName>
        <fullName evidence="3">DNA-directed RNA polymerase III subunit L</fullName>
    </alternativeName>
    <alternativeName>
        <fullName evidence="3">DNA-directed RNA polymerases I, II, and III subunit RPABC5</fullName>
        <shortName evidence="3">RNA polymerases I, II, and III subunit ABC5</shortName>
    </alternativeName>
    <alternativeName>
        <fullName evidence="3">RPB10 homolog</fullName>
    </alternativeName>
</protein>
<accession>Q9SYA6</accession>
<evidence type="ECO:0000250" key="1"/>
<evidence type="ECO:0000269" key="2">
    <source>
    </source>
</evidence>
<evidence type="ECO:0000303" key="3">
    <source>
    </source>
</evidence>
<evidence type="ECO:0000305" key="4"/>
<evidence type="ECO:0000312" key="5">
    <source>
        <dbReference type="Araport" id="AT1G61700"/>
    </source>
</evidence>
<evidence type="ECO:0000312" key="6">
    <source>
        <dbReference type="EMBL" id="AAD21426.1"/>
    </source>
</evidence>